<gene>
    <name evidence="1" type="primary">mtnD</name>
    <name type="ordered locus">XAC1839</name>
</gene>
<organism>
    <name type="scientific">Xanthomonas axonopodis pv. citri (strain 306)</name>
    <dbReference type="NCBI Taxonomy" id="190486"/>
    <lineage>
        <taxon>Bacteria</taxon>
        <taxon>Pseudomonadati</taxon>
        <taxon>Pseudomonadota</taxon>
        <taxon>Gammaproteobacteria</taxon>
        <taxon>Lysobacterales</taxon>
        <taxon>Lysobacteraceae</taxon>
        <taxon>Xanthomonas</taxon>
    </lineage>
</organism>
<keyword id="KW-0028">Amino-acid biosynthesis</keyword>
<keyword id="KW-0223">Dioxygenase</keyword>
<keyword id="KW-0408">Iron</keyword>
<keyword id="KW-0479">Metal-binding</keyword>
<keyword id="KW-0486">Methionine biosynthesis</keyword>
<keyword id="KW-0533">Nickel</keyword>
<keyword id="KW-0560">Oxidoreductase</keyword>
<proteinExistence type="inferred from homology"/>
<comment type="function">
    <text evidence="1">Catalyzes 2 different reactions between oxygen and the acireductone 1,2-dihydroxy-3-keto-5-methylthiopentene (DHK-MTPene) depending upon the metal bound in the active site. Fe-containing acireductone dioxygenase (Fe-ARD) produces formate and 2-keto-4-methylthiobutyrate (KMTB), the alpha-ketoacid precursor of methionine in the methionine recycle pathway. Ni-containing acireductone dioxygenase (Ni-ARD) produces methylthiopropionate, carbon monoxide and formate, and does not lie on the methionine recycle pathway.</text>
</comment>
<comment type="catalytic activity">
    <reaction evidence="1">
        <text>1,2-dihydroxy-5-(methylsulfanyl)pent-1-en-3-one + O2 = 3-(methylsulfanyl)propanoate + CO + formate + 2 H(+)</text>
        <dbReference type="Rhea" id="RHEA:14161"/>
        <dbReference type="ChEBI" id="CHEBI:15378"/>
        <dbReference type="ChEBI" id="CHEBI:15379"/>
        <dbReference type="ChEBI" id="CHEBI:15740"/>
        <dbReference type="ChEBI" id="CHEBI:17245"/>
        <dbReference type="ChEBI" id="CHEBI:49016"/>
        <dbReference type="ChEBI" id="CHEBI:49252"/>
        <dbReference type="EC" id="1.13.11.53"/>
    </reaction>
</comment>
<comment type="catalytic activity">
    <reaction evidence="1">
        <text>1,2-dihydroxy-5-(methylsulfanyl)pent-1-en-3-one + O2 = 4-methylsulfanyl-2-oxobutanoate + formate + 2 H(+)</text>
        <dbReference type="Rhea" id="RHEA:24504"/>
        <dbReference type="ChEBI" id="CHEBI:15378"/>
        <dbReference type="ChEBI" id="CHEBI:15379"/>
        <dbReference type="ChEBI" id="CHEBI:15740"/>
        <dbReference type="ChEBI" id="CHEBI:16723"/>
        <dbReference type="ChEBI" id="CHEBI:49252"/>
        <dbReference type="EC" id="1.13.11.54"/>
    </reaction>
</comment>
<comment type="cofactor">
    <cofactor evidence="1">
        <name>Fe(2+)</name>
        <dbReference type="ChEBI" id="CHEBI:29033"/>
    </cofactor>
    <text evidence="1">Binds 1 Fe(2+) cation per monomer.</text>
</comment>
<comment type="cofactor">
    <cofactor evidence="1">
        <name>Ni(2+)</name>
        <dbReference type="ChEBI" id="CHEBI:49786"/>
    </cofactor>
    <text evidence="1">Binds 1 nickel ion per monomer.</text>
</comment>
<comment type="pathway">
    <text evidence="1">Amino-acid biosynthesis; L-methionine biosynthesis via salvage pathway; L-methionine from S-methyl-5-thio-alpha-D-ribose 1-phosphate: step 5/6.</text>
</comment>
<comment type="subunit">
    <text evidence="1">Monomer.</text>
</comment>
<comment type="similarity">
    <text evidence="1">Belongs to the acireductone dioxygenase (ARD) family.</text>
</comment>
<name>MTND_XANAC</name>
<feature type="chain" id="PRO_0000359246" description="Acireductone dioxygenase">
    <location>
        <begin position="1"/>
        <end position="188"/>
    </location>
</feature>
<feature type="binding site" evidence="1">
    <location>
        <position position="97"/>
    </location>
    <ligand>
        <name>Fe(2+)</name>
        <dbReference type="ChEBI" id="CHEBI:29033"/>
    </ligand>
</feature>
<feature type="binding site" evidence="1">
    <location>
        <position position="97"/>
    </location>
    <ligand>
        <name>Ni(2+)</name>
        <dbReference type="ChEBI" id="CHEBI:49786"/>
    </ligand>
</feature>
<feature type="binding site" evidence="1">
    <location>
        <position position="99"/>
    </location>
    <ligand>
        <name>Fe(2+)</name>
        <dbReference type="ChEBI" id="CHEBI:29033"/>
    </ligand>
</feature>
<feature type="binding site" evidence="1">
    <location>
        <position position="99"/>
    </location>
    <ligand>
        <name>Ni(2+)</name>
        <dbReference type="ChEBI" id="CHEBI:49786"/>
    </ligand>
</feature>
<feature type="binding site" evidence="1">
    <location>
        <position position="103"/>
    </location>
    <ligand>
        <name>Fe(2+)</name>
        <dbReference type="ChEBI" id="CHEBI:29033"/>
    </ligand>
</feature>
<feature type="binding site" evidence="1">
    <location>
        <position position="103"/>
    </location>
    <ligand>
        <name>Ni(2+)</name>
        <dbReference type="ChEBI" id="CHEBI:49786"/>
    </ligand>
</feature>
<feature type="binding site" evidence="1">
    <location>
        <position position="141"/>
    </location>
    <ligand>
        <name>Fe(2+)</name>
        <dbReference type="ChEBI" id="CHEBI:29033"/>
    </ligand>
</feature>
<feature type="binding site" evidence="1">
    <location>
        <position position="141"/>
    </location>
    <ligand>
        <name>Ni(2+)</name>
        <dbReference type="ChEBI" id="CHEBI:49786"/>
    </ligand>
</feature>
<feature type="site" description="May play a role in metal incorporation in vivo" evidence="1">
    <location>
        <position position="96"/>
    </location>
</feature>
<feature type="site" description="May play a role in transmitting local conformational changes" evidence="1">
    <location>
        <position position="102"/>
    </location>
</feature>
<feature type="site" description="Important to generate the dianion" evidence="1">
    <location>
        <position position="105"/>
    </location>
</feature>
<accession>Q8PLG1</accession>
<sequence length="188" mass="21230">MSRLRIFADTNPATPEFDSRDGDAIAAELVKIGVTFERWHASAPVEPGATPEQVMDAYRADIDRISAERGFKTVDVVSIAPDNPKREEMRAKFLDEHFHKEDEVRFFVAGSGLFTLHVDAKVYEIECVKDDLIAVPDGTLHWFDMGPEPHFVAIRFFTEPDGWVGHFTGTEIAKQFPRYAPKKPHKAS</sequence>
<dbReference type="EC" id="1.13.11.54" evidence="1"/>
<dbReference type="EC" id="1.13.11.53" evidence="1"/>
<dbReference type="EMBL" id="AE008923">
    <property type="protein sequence ID" value="AAM36701.1"/>
    <property type="molecule type" value="Genomic_DNA"/>
</dbReference>
<dbReference type="RefSeq" id="WP_011051176.1">
    <property type="nucleotide sequence ID" value="NC_003919.1"/>
</dbReference>
<dbReference type="SMR" id="Q8PLG1"/>
<dbReference type="KEGG" id="xac:XAC1839"/>
<dbReference type="eggNOG" id="COG1791">
    <property type="taxonomic scope" value="Bacteria"/>
</dbReference>
<dbReference type="HOGENOM" id="CLU_125400_0_0_6"/>
<dbReference type="UniPathway" id="UPA00904">
    <property type="reaction ID" value="UER00878"/>
</dbReference>
<dbReference type="Proteomes" id="UP000000576">
    <property type="component" value="Chromosome"/>
</dbReference>
<dbReference type="GO" id="GO:0010308">
    <property type="term" value="F:acireductone dioxygenase (Ni2+-requiring) activity"/>
    <property type="evidence" value="ECO:0007669"/>
    <property type="project" value="UniProtKB-UniRule"/>
</dbReference>
<dbReference type="GO" id="GO:0010309">
    <property type="term" value="F:acireductone dioxygenase [iron(II)-requiring] activity"/>
    <property type="evidence" value="ECO:0007669"/>
    <property type="project" value="UniProtKB-UniRule"/>
</dbReference>
<dbReference type="GO" id="GO:0005506">
    <property type="term" value="F:iron ion binding"/>
    <property type="evidence" value="ECO:0007669"/>
    <property type="project" value="UniProtKB-UniRule"/>
</dbReference>
<dbReference type="GO" id="GO:0016151">
    <property type="term" value="F:nickel cation binding"/>
    <property type="evidence" value="ECO:0007669"/>
    <property type="project" value="UniProtKB-UniRule"/>
</dbReference>
<dbReference type="GO" id="GO:0019509">
    <property type="term" value="P:L-methionine salvage from methylthioadenosine"/>
    <property type="evidence" value="ECO:0007669"/>
    <property type="project" value="UniProtKB-UniRule"/>
</dbReference>
<dbReference type="GO" id="GO:0019284">
    <property type="term" value="P:L-methionine salvage from S-adenosylmethionine"/>
    <property type="evidence" value="ECO:0007669"/>
    <property type="project" value="InterPro"/>
</dbReference>
<dbReference type="CDD" id="cd02232">
    <property type="entry name" value="cupin_ARD"/>
    <property type="match status" value="1"/>
</dbReference>
<dbReference type="FunFam" id="2.60.120.10:FF:000056">
    <property type="entry name" value="Acireductone dioxygenase"/>
    <property type="match status" value="1"/>
</dbReference>
<dbReference type="Gene3D" id="2.60.120.10">
    <property type="entry name" value="Jelly Rolls"/>
    <property type="match status" value="1"/>
</dbReference>
<dbReference type="HAMAP" id="MF_01682">
    <property type="entry name" value="Salvage_MtnD"/>
    <property type="match status" value="1"/>
</dbReference>
<dbReference type="InterPro" id="IPR004313">
    <property type="entry name" value="ARD"/>
</dbReference>
<dbReference type="InterPro" id="IPR023956">
    <property type="entry name" value="ARD_bac"/>
</dbReference>
<dbReference type="InterPro" id="IPR014710">
    <property type="entry name" value="RmlC-like_jellyroll"/>
</dbReference>
<dbReference type="InterPro" id="IPR011051">
    <property type="entry name" value="RmlC_Cupin_sf"/>
</dbReference>
<dbReference type="PANTHER" id="PTHR23418">
    <property type="entry name" value="ACIREDUCTONE DIOXYGENASE"/>
    <property type="match status" value="1"/>
</dbReference>
<dbReference type="PANTHER" id="PTHR23418:SF0">
    <property type="entry name" value="ACIREDUCTONE DIOXYGENASE"/>
    <property type="match status" value="1"/>
</dbReference>
<dbReference type="Pfam" id="PF03079">
    <property type="entry name" value="ARD"/>
    <property type="match status" value="1"/>
</dbReference>
<dbReference type="SUPFAM" id="SSF51182">
    <property type="entry name" value="RmlC-like cupins"/>
    <property type="match status" value="1"/>
</dbReference>
<reference key="1">
    <citation type="journal article" date="2002" name="Nature">
        <title>Comparison of the genomes of two Xanthomonas pathogens with differing host specificities.</title>
        <authorList>
            <person name="da Silva A.C.R."/>
            <person name="Ferro J.A."/>
            <person name="Reinach F.C."/>
            <person name="Farah C.S."/>
            <person name="Furlan L.R."/>
            <person name="Quaggio R.B."/>
            <person name="Monteiro-Vitorello C.B."/>
            <person name="Van Sluys M.A."/>
            <person name="Almeida N.F. Jr."/>
            <person name="Alves L.M.C."/>
            <person name="do Amaral A.M."/>
            <person name="Bertolini M.C."/>
            <person name="Camargo L.E.A."/>
            <person name="Camarotte G."/>
            <person name="Cannavan F."/>
            <person name="Cardozo J."/>
            <person name="Chambergo F."/>
            <person name="Ciapina L.P."/>
            <person name="Cicarelli R.M.B."/>
            <person name="Coutinho L.L."/>
            <person name="Cursino-Santos J.R."/>
            <person name="El-Dorry H."/>
            <person name="Faria J.B."/>
            <person name="Ferreira A.J.S."/>
            <person name="Ferreira R.C.C."/>
            <person name="Ferro M.I.T."/>
            <person name="Formighieri E.F."/>
            <person name="Franco M.C."/>
            <person name="Greggio C.C."/>
            <person name="Gruber A."/>
            <person name="Katsuyama A.M."/>
            <person name="Kishi L.T."/>
            <person name="Leite R.P."/>
            <person name="Lemos E.G.M."/>
            <person name="Lemos M.V.F."/>
            <person name="Locali E.C."/>
            <person name="Machado M.A."/>
            <person name="Madeira A.M.B.N."/>
            <person name="Martinez-Rossi N.M."/>
            <person name="Martins E.C."/>
            <person name="Meidanis J."/>
            <person name="Menck C.F.M."/>
            <person name="Miyaki C.Y."/>
            <person name="Moon D.H."/>
            <person name="Moreira L.M."/>
            <person name="Novo M.T.M."/>
            <person name="Okura V.K."/>
            <person name="Oliveira M.C."/>
            <person name="Oliveira V.R."/>
            <person name="Pereira H.A."/>
            <person name="Rossi A."/>
            <person name="Sena J.A.D."/>
            <person name="Silva C."/>
            <person name="de Souza R.F."/>
            <person name="Spinola L.A.F."/>
            <person name="Takita M.A."/>
            <person name="Tamura R.E."/>
            <person name="Teixeira E.C."/>
            <person name="Tezza R.I.D."/>
            <person name="Trindade dos Santos M."/>
            <person name="Truffi D."/>
            <person name="Tsai S.M."/>
            <person name="White F.F."/>
            <person name="Setubal J.C."/>
            <person name="Kitajima J.P."/>
        </authorList>
    </citation>
    <scope>NUCLEOTIDE SEQUENCE [LARGE SCALE GENOMIC DNA]</scope>
    <source>
        <strain>306</strain>
    </source>
</reference>
<protein>
    <recommendedName>
        <fullName evidence="1">Acireductone dioxygenase</fullName>
    </recommendedName>
    <alternativeName>
        <fullName evidence="1">1,2-dihydroxy-3-keto-5-methylthiopentene dioxygenase</fullName>
        <shortName evidence="1">DHK-MTPene dioxygenase</shortName>
    </alternativeName>
    <alternativeName>
        <fullName evidence="1">Acireductone dioxygenase (Fe(2+)-requiring)</fullName>
        <shortName evidence="1">ARD'</shortName>
        <shortName evidence="1">Fe-ARD</shortName>
        <ecNumber evidence="1">1.13.11.54</ecNumber>
    </alternativeName>
    <alternativeName>
        <fullName evidence="1">Acireductone dioxygenase (Ni(2+)-requiring)</fullName>
        <shortName evidence="1">ARD</shortName>
        <shortName evidence="1">Ni-ARD</shortName>
        <ecNumber evidence="1">1.13.11.53</ecNumber>
    </alternativeName>
</protein>
<evidence type="ECO:0000255" key="1">
    <source>
        <dbReference type="HAMAP-Rule" id="MF_01682"/>
    </source>
</evidence>